<feature type="chain" id="PRO_1000187775" description="Demethylmenaquinone methyltransferase">
    <location>
        <begin position="1"/>
        <end position="237"/>
    </location>
</feature>
<feature type="binding site" evidence="1">
    <location>
        <position position="58"/>
    </location>
    <ligand>
        <name>S-adenosyl-L-methionine</name>
        <dbReference type="ChEBI" id="CHEBI:59789"/>
    </ligand>
</feature>
<feature type="binding site" evidence="1">
    <location>
        <position position="79"/>
    </location>
    <ligand>
        <name>S-adenosyl-L-methionine</name>
        <dbReference type="ChEBI" id="CHEBI:59789"/>
    </ligand>
</feature>
<feature type="binding site" evidence="1">
    <location>
        <begin position="106"/>
        <end position="107"/>
    </location>
    <ligand>
        <name>S-adenosyl-L-methionine</name>
        <dbReference type="ChEBI" id="CHEBI:59789"/>
    </ligand>
</feature>
<reference key="1">
    <citation type="journal article" date="2011" name="J. Bacteriol.">
        <title>Genome sequence of lineage III Listeria monocytogenes strain HCC23.</title>
        <authorList>
            <person name="Steele C.L."/>
            <person name="Donaldson J.R."/>
            <person name="Paul D."/>
            <person name="Banes M.M."/>
            <person name="Arick T."/>
            <person name="Bridges S.M."/>
            <person name="Lawrence M.L."/>
        </authorList>
    </citation>
    <scope>NUCLEOTIDE SEQUENCE [LARGE SCALE GENOMIC DNA]</scope>
    <source>
        <strain>HCC23</strain>
    </source>
</reference>
<dbReference type="EC" id="2.1.1.163" evidence="1"/>
<dbReference type="EMBL" id="CP001175">
    <property type="protein sequence ID" value="ACK38981.1"/>
    <property type="molecule type" value="Genomic_DNA"/>
</dbReference>
<dbReference type="RefSeq" id="WP_003728756.1">
    <property type="nucleotide sequence ID" value="NC_011660.1"/>
</dbReference>
<dbReference type="SMR" id="B8DBZ5"/>
<dbReference type="KEGG" id="lmh:LMHCC_0625"/>
<dbReference type="HOGENOM" id="CLU_037990_0_0_9"/>
<dbReference type="UniPathway" id="UPA00079">
    <property type="reaction ID" value="UER00169"/>
</dbReference>
<dbReference type="GO" id="GO:0043770">
    <property type="term" value="F:demethylmenaquinone methyltransferase activity"/>
    <property type="evidence" value="ECO:0007669"/>
    <property type="project" value="UniProtKB-UniRule"/>
</dbReference>
<dbReference type="GO" id="GO:0009234">
    <property type="term" value="P:menaquinone biosynthetic process"/>
    <property type="evidence" value="ECO:0007669"/>
    <property type="project" value="UniProtKB-UniRule"/>
</dbReference>
<dbReference type="GO" id="GO:0032259">
    <property type="term" value="P:methylation"/>
    <property type="evidence" value="ECO:0007669"/>
    <property type="project" value="UniProtKB-KW"/>
</dbReference>
<dbReference type="CDD" id="cd02440">
    <property type="entry name" value="AdoMet_MTases"/>
    <property type="match status" value="1"/>
</dbReference>
<dbReference type="FunFam" id="3.40.50.150:FF:000086">
    <property type="entry name" value="Demethylmenaquinone methyltransferase"/>
    <property type="match status" value="1"/>
</dbReference>
<dbReference type="Gene3D" id="3.40.50.150">
    <property type="entry name" value="Vaccinia Virus protein VP39"/>
    <property type="match status" value="1"/>
</dbReference>
<dbReference type="HAMAP" id="MF_01813">
    <property type="entry name" value="MenG_UbiE_methyltr"/>
    <property type="match status" value="1"/>
</dbReference>
<dbReference type="InterPro" id="IPR014122">
    <property type="entry name" value="MenG_heptapren"/>
</dbReference>
<dbReference type="InterPro" id="IPR029063">
    <property type="entry name" value="SAM-dependent_MTases_sf"/>
</dbReference>
<dbReference type="InterPro" id="IPR004033">
    <property type="entry name" value="UbiE/COQ5_MeTrFase"/>
</dbReference>
<dbReference type="InterPro" id="IPR023576">
    <property type="entry name" value="UbiE/COQ5_MeTrFase_CS"/>
</dbReference>
<dbReference type="NCBIfam" id="TIGR02752">
    <property type="entry name" value="MenG_heptapren"/>
    <property type="match status" value="1"/>
</dbReference>
<dbReference type="NCBIfam" id="TIGR01934">
    <property type="entry name" value="MenG_MenH_UbiE"/>
    <property type="match status" value="1"/>
</dbReference>
<dbReference type="NCBIfam" id="NF001243">
    <property type="entry name" value="PRK00216.1-4"/>
    <property type="match status" value="1"/>
</dbReference>
<dbReference type="NCBIfam" id="NF001244">
    <property type="entry name" value="PRK00216.1-5"/>
    <property type="match status" value="1"/>
</dbReference>
<dbReference type="PANTHER" id="PTHR43591:SF24">
    <property type="entry name" value="2-METHOXY-6-POLYPRENYL-1,4-BENZOQUINOL METHYLASE, MITOCHONDRIAL"/>
    <property type="match status" value="1"/>
</dbReference>
<dbReference type="PANTHER" id="PTHR43591">
    <property type="entry name" value="METHYLTRANSFERASE"/>
    <property type="match status" value="1"/>
</dbReference>
<dbReference type="Pfam" id="PF01209">
    <property type="entry name" value="Ubie_methyltran"/>
    <property type="match status" value="1"/>
</dbReference>
<dbReference type="SUPFAM" id="SSF53335">
    <property type="entry name" value="S-adenosyl-L-methionine-dependent methyltransferases"/>
    <property type="match status" value="1"/>
</dbReference>
<dbReference type="PROSITE" id="PS51608">
    <property type="entry name" value="SAM_MT_UBIE"/>
    <property type="match status" value="1"/>
</dbReference>
<dbReference type="PROSITE" id="PS01183">
    <property type="entry name" value="UBIE_1"/>
    <property type="match status" value="1"/>
</dbReference>
<dbReference type="PROSITE" id="PS01184">
    <property type="entry name" value="UBIE_2"/>
    <property type="match status" value="1"/>
</dbReference>
<keyword id="KW-0474">Menaquinone biosynthesis</keyword>
<keyword id="KW-0489">Methyltransferase</keyword>
<keyword id="KW-0949">S-adenosyl-L-methionine</keyword>
<keyword id="KW-0808">Transferase</keyword>
<proteinExistence type="inferred from homology"/>
<protein>
    <recommendedName>
        <fullName evidence="1">Demethylmenaquinone methyltransferase</fullName>
        <ecNumber evidence="1">2.1.1.163</ecNumber>
    </recommendedName>
</protein>
<name>MENG_LISMH</name>
<organism>
    <name type="scientific">Listeria monocytogenes serotype 4a (strain HCC23)</name>
    <dbReference type="NCBI Taxonomy" id="552536"/>
    <lineage>
        <taxon>Bacteria</taxon>
        <taxon>Bacillati</taxon>
        <taxon>Bacillota</taxon>
        <taxon>Bacilli</taxon>
        <taxon>Bacillales</taxon>
        <taxon>Listeriaceae</taxon>
        <taxon>Listeria</taxon>
    </lineage>
</organism>
<evidence type="ECO:0000255" key="1">
    <source>
        <dbReference type="HAMAP-Rule" id="MF_01813"/>
    </source>
</evidence>
<gene>
    <name evidence="1" type="primary">menG</name>
    <name type="ordered locus">LMHCC_0625</name>
</gene>
<sequence length="237" mass="27303">MTETKEEKVHKVFEKISPSYDRMNSVISFKLHVKWRKETMKLMRVQKGTNVLDVCCGTADWSIMMAEEIGPEGHVTGLDFSENMLKVGREKVTEADLHNVELIHGNAMELPFPDNSFDYVTIGFGLRNVPDYMQVLREMYRVLKPGGQLACIDTSQPNIPGWKQVFNAYFRYVMPVFGKFFAKSYKEYSWLQESTREFPGMARLAEMFQEAGFSYVRYISHSGGASATHFGFKKKEQ</sequence>
<accession>B8DBZ5</accession>
<comment type="function">
    <text evidence="1">Methyltransferase required for the conversion of demethylmenaquinol (DMKH2) to menaquinol (MKH2).</text>
</comment>
<comment type="catalytic activity">
    <reaction evidence="1">
        <text>a 2-demethylmenaquinol + S-adenosyl-L-methionine = a menaquinol + S-adenosyl-L-homocysteine + H(+)</text>
        <dbReference type="Rhea" id="RHEA:42640"/>
        <dbReference type="Rhea" id="RHEA-COMP:9539"/>
        <dbReference type="Rhea" id="RHEA-COMP:9563"/>
        <dbReference type="ChEBI" id="CHEBI:15378"/>
        <dbReference type="ChEBI" id="CHEBI:18151"/>
        <dbReference type="ChEBI" id="CHEBI:55437"/>
        <dbReference type="ChEBI" id="CHEBI:57856"/>
        <dbReference type="ChEBI" id="CHEBI:59789"/>
        <dbReference type="EC" id="2.1.1.163"/>
    </reaction>
</comment>
<comment type="pathway">
    <text evidence="1">Quinol/quinone metabolism; menaquinone biosynthesis; menaquinol from 1,4-dihydroxy-2-naphthoate: step 2/2.</text>
</comment>
<comment type="similarity">
    <text evidence="1">Belongs to the class I-like SAM-binding methyltransferase superfamily. MenG/UbiE family.</text>
</comment>